<feature type="transit peptide" description="Mitochondrion" evidence="1">
    <location>
        <begin position="1"/>
        <end position="59"/>
    </location>
</feature>
<feature type="chain" id="PRO_0000342870" description="Pentatricopeptide repeat-containing protein At1g77360, mitochondrial">
    <location>
        <begin position="60"/>
        <end position="517"/>
    </location>
</feature>
<feature type="repeat" description="PPR 1">
    <location>
        <begin position="133"/>
        <end position="163"/>
    </location>
</feature>
<feature type="repeat" description="PPR 2">
    <location>
        <begin position="167"/>
        <end position="201"/>
    </location>
</feature>
<feature type="repeat" description="PPR 3">
    <location>
        <begin position="202"/>
        <end position="232"/>
    </location>
</feature>
<feature type="repeat" description="PPR 4">
    <location>
        <begin position="236"/>
        <end position="270"/>
    </location>
</feature>
<feature type="repeat" description="PPR 5">
    <location>
        <begin position="271"/>
        <end position="305"/>
    </location>
</feature>
<feature type="repeat" description="PPR 6">
    <location>
        <begin position="306"/>
        <end position="340"/>
    </location>
</feature>
<feature type="repeat" description="PPR 7">
    <location>
        <begin position="341"/>
        <end position="375"/>
    </location>
</feature>
<feature type="repeat" description="PPR 8">
    <location>
        <begin position="376"/>
        <end position="406"/>
    </location>
</feature>
<feature type="repeat" description="PPR 9">
    <location>
        <begin position="410"/>
        <end position="444"/>
    </location>
</feature>
<feature type="repeat" description="PPR 10">
    <location>
        <begin position="445"/>
        <end position="479"/>
    </location>
</feature>
<protein>
    <recommendedName>
        <fullName>Pentatricopeptide repeat-containing protein At1g77360, mitochondrial</fullName>
    </recommendedName>
</protein>
<name>PP129_ARATH</name>
<gene>
    <name type="ordered locus">At1g77360</name>
    <name type="ORF">F2P24.7</name>
</gene>
<organism>
    <name type="scientific">Arabidopsis thaliana</name>
    <name type="common">Mouse-ear cress</name>
    <dbReference type="NCBI Taxonomy" id="3702"/>
    <lineage>
        <taxon>Eukaryota</taxon>
        <taxon>Viridiplantae</taxon>
        <taxon>Streptophyta</taxon>
        <taxon>Embryophyta</taxon>
        <taxon>Tracheophyta</taxon>
        <taxon>Spermatophyta</taxon>
        <taxon>Magnoliopsida</taxon>
        <taxon>eudicotyledons</taxon>
        <taxon>Gunneridae</taxon>
        <taxon>Pentapetalae</taxon>
        <taxon>rosids</taxon>
        <taxon>malvids</taxon>
        <taxon>Brassicales</taxon>
        <taxon>Brassicaceae</taxon>
        <taxon>Camelineae</taxon>
        <taxon>Arabidopsis</taxon>
    </lineage>
</organism>
<reference key="1">
    <citation type="journal article" date="2000" name="Nature">
        <title>Sequence and analysis of chromosome 1 of the plant Arabidopsis thaliana.</title>
        <authorList>
            <person name="Theologis A."/>
            <person name="Ecker J.R."/>
            <person name="Palm C.J."/>
            <person name="Federspiel N.A."/>
            <person name="Kaul S."/>
            <person name="White O."/>
            <person name="Alonso J."/>
            <person name="Altafi H."/>
            <person name="Araujo R."/>
            <person name="Bowman C.L."/>
            <person name="Brooks S.Y."/>
            <person name="Buehler E."/>
            <person name="Chan A."/>
            <person name="Chao Q."/>
            <person name="Chen H."/>
            <person name="Cheuk R.F."/>
            <person name="Chin C.W."/>
            <person name="Chung M.K."/>
            <person name="Conn L."/>
            <person name="Conway A.B."/>
            <person name="Conway A.R."/>
            <person name="Creasy T.H."/>
            <person name="Dewar K."/>
            <person name="Dunn P."/>
            <person name="Etgu P."/>
            <person name="Feldblyum T.V."/>
            <person name="Feng J.-D."/>
            <person name="Fong B."/>
            <person name="Fujii C.Y."/>
            <person name="Gill J.E."/>
            <person name="Goldsmith A.D."/>
            <person name="Haas B."/>
            <person name="Hansen N.F."/>
            <person name="Hughes B."/>
            <person name="Huizar L."/>
            <person name="Hunter J.L."/>
            <person name="Jenkins J."/>
            <person name="Johnson-Hopson C."/>
            <person name="Khan S."/>
            <person name="Khaykin E."/>
            <person name="Kim C.J."/>
            <person name="Koo H.L."/>
            <person name="Kremenetskaia I."/>
            <person name="Kurtz D.B."/>
            <person name="Kwan A."/>
            <person name="Lam B."/>
            <person name="Langin-Hooper S."/>
            <person name="Lee A."/>
            <person name="Lee J.M."/>
            <person name="Lenz C.A."/>
            <person name="Li J.H."/>
            <person name="Li Y.-P."/>
            <person name="Lin X."/>
            <person name="Liu S.X."/>
            <person name="Liu Z.A."/>
            <person name="Luros J.S."/>
            <person name="Maiti R."/>
            <person name="Marziali A."/>
            <person name="Militscher J."/>
            <person name="Miranda M."/>
            <person name="Nguyen M."/>
            <person name="Nierman W.C."/>
            <person name="Osborne B.I."/>
            <person name="Pai G."/>
            <person name="Peterson J."/>
            <person name="Pham P.K."/>
            <person name="Rizzo M."/>
            <person name="Rooney T."/>
            <person name="Rowley D."/>
            <person name="Sakano H."/>
            <person name="Salzberg S.L."/>
            <person name="Schwartz J.R."/>
            <person name="Shinn P."/>
            <person name="Southwick A.M."/>
            <person name="Sun H."/>
            <person name="Tallon L.J."/>
            <person name="Tambunga G."/>
            <person name="Toriumi M.J."/>
            <person name="Town C.D."/>
            <person name="Utterback T."/>
            <person name="Van Aken S."/>
            <person name="Vaysberg M."/>
            <person name="Vysotskaia V.S."/>
            <person name="Walker M."/>
            <person name="Wu D."/>
            <person name="Yu G."/>
            <person name="Fraser C.M."/>
            <person name="Venter J.C."/>
            <person name="Davis R.W."/>
        </authorList>
    </citation>
    <scope>NUCLEOTIDE SEQUENCE [LARGE SCALE GENOMIC DNA]</scope>
    <source>
        <strain>cv. Columbia</strain>
    </source>
</reference>
<reference key="2">
    <citation type="journal article" date="2017" name="Plant J.">
        <title>Araport11: a complete reannotation of the Arabidopsis thaliana reference genome.</title>
        <authorList>
            <person name="Cheng C.Y."/>
            <person name="Krishnakumar V."/>
            <person name="Chan A.P."/>
            <person name="Thibaud-Nissen F."/>
            <person name="Schobel S."/>
            <person name="Town C.D."/>
        </authorList>
    </citation>
    <scope>GENOME REANNOTATION</scope>
    <source>
        <strain>cv. Columbia</strain>
    </source>
</reference>
<reference key="3">
    <citation type="journal article" date="2004" name="Plant Cell">
        <title>Genome-wide analysis of Arabidopsis pentatricopeptide repeat proteins reveals their essential role in organelle biogenesis.</title>
        <authorList>
            <person name="Lurin C."/>
            <person name="Andres C."/>
            <person name="Aubourg S."/>
            <person name="Bellaoui M."/>
            <person name="Bitton F."/>
            <person name="Bruyere C."/>
            <person name="Caboche M."/>
            <person name="Debast C."/>
            <person name="Gualberto J."/>
            <person name="Hoffmann B."/>
            <person name="Lecharny A."/>
            <person name="Le Ret M."/>
            <person name="Martin-Magniette M.-L."/>
            <person name="Mireau H."/>
            <person name="Peeters N."/>
            <person name="Renou J.-P."/>
            <person name="Szurek B."/>
            <person name="Taconnat L."/>
            <person name="Small I."/>
        </authorList>
    </citation>
    <scope>GENE FAMILY</scope>
</reference>
<comment type="subcellular location">
    <subcellularLocation>
        <location evidence="2">Mitochondrion</location>
    </subcellularLocation>
</comment>
<comment type="similarity">
    <text evidence="2">Belongs to the PPR family. P subfamily.</text>
</comment>
<comment type="sequence caution" evidence="2">
    <conflict type="erroneous initiation">
        <sequence resource="EMBL-CDS" id="AAG29201"/>
    </conflict>
</comment>
<comment type="online information" name="Pentatricopeptide repeat proteins">
    <link uri="https://ppr.plantenergy.uwa.edu.au"/>
</comment>
<sequence length="517" mass="60205">MKRFRIRSVDFRQLVNFFSFMRWECSSSATVWVRFNMTIRIINRQSRFCCKSFLSARLYSSSEQVRDVADVAKNISKVLMSSPQLVLDSALDQSGLRVSQEVVEDVLNRFRNAGLLTYRFFQWSEKQRHYEHSVRAYHMMIESTAKIRQYKLMWDLINAMRKKKMLNVETFCIVMRKYARAQKVDEAIYAFNVMEKYDLPPNLVAFNGLLSALCKSKNVRKAQEVFENMRDRFTPDSKTYSILLEGWGKEPNLPKAREVFREMIDAGCHPDIVTYSIMVDILCKAGRVDEALGIVRSMDPSICKPTTFIYSVLVHTYGTENRLEEAVDTFLEMERSGMKADVAVFNSLIGAFCKANRMKNVYRVLKEMKSKGVTPNSKSCNIILRHLIERGEKDEAFDVFRKMIKVCEPDADTYTMVIKMFCEKKEMETADKVWKYMRKKGVFPSMHTFSVLINGLCEERTTQKACVLLEEMIEMGIRPSGVTFGRLRQLLIKEEREDVLKFLNEKMNVLVNEPLCD</sequence>
<keyword id="KW-0496">Mitochondrion</keyword>
<keyword id="KW-1185">Reference proteome</keyword>
<keyword id="KW-0677">Repeat</keyword>
<keyword id="KW-0809">Transit peptide</keyword>
<proteinExistence type="evidence at transcript level"/>
<dbReference type="EMBL" id="AC078898">
    <property type="protein sequence ID" value="AAG29201.1"/>
    <property type="status" value="ALT_INIT"/>
    <property type="molecule type" value="Genomic_DNA"/>
</dbReference>
<dbReference type="EMBL" id="CP002684">
    <property type="protein sequence ID" value="AEE35969.1"/>
    <property type="molecule type" value="Genomic_DNA"/>
</dbReference>
<dbReference type="PIR" id="F96802">
    <property type="entry name" value="F96802"/>
</dbReference>
<dbReference type="SMR" id="Q9FVX2"/>
<dbReference type="FunCoup" id="Q9FVX2">
    <property type="interactions" value="309"/>
</dbReference>
<dbReference type="iPTMnet" id="Q9FVX2"/>
<dbReference type="PaxDb" id="3702-AT1G77360.1"/>
<dbReference type="EnsemblPlants" id="AT1G77360.1">
    <property type="protein sequence ID" value="AT1G77360.1"/>
    <property type="gene ID" value="AT1G77360"/>
</dbReference>
<dbReference type="GeneID" id="844072"/>
<dbReference type="Gramene" id="AT1G77360.1">
    <property type="protein sequence ID" value="AT1G77360.1"/>
    <property type="gene ID" value="AT1G77360"/>
</dbReference>
<dbReference type="KEGG" id="ath:AT1G77360"/>
<dbReference type="Araport" id="AT1G77360"/>
<dbReference type="TAIR" id="AT1G77360">
    <property type="gene designation" value="APPR6"/>
</dbReference>
<dbReference type="eggNOG" id="KOG4197">
    <property type="taxonomic scope" value="Eukaryota"/>
</dbReference>
<dbReference type="HOGENOM" id="CLU_002706_49_20_1"/>
<dbReference type="InParanoid" id="Q9FVX2"/>
<dbReference type="PhylomeDB" id="Q9FVX2"/>
<dbReference type="PRO" id="PR:Q9FVX2"/>
<dbReference type="Proteomes" id="UP000006548">
    <property type="component" value="Chromosome 1"/>
</dbReference>
<dbReference type="ExpressionAtlas" id="Q9FVX2">
    <property type="expression patterns" value="baseline and differential"/>
</dbReference>
<dbReference type="GO" id="GO:0005739">
    <property type="term" value="C:mitochondrion"/>
    <property type="evidence" value="ECO:0007669"/>
    <property type="project" value="UniProtKB-SubCell"/>
</dbReference>
<dbReference type="Gene3D" id="1.25.40.10">
    <property type="entry name" value="Tetratricopeptide repeat domain"/>
    <property type="match status" value="3"/>
</dbReference>
<dbReference type="InterPro" id="IPR002885">
    <property type="entry name" value="Pentatricopeptide_rpt"/>
</dbReference>
<dbReference type="InterPro" id="IPR011990">
    <property type="entry name" value="TPR-like_helical_dom_sf"/>
</dbReference>
<dbReference type="NCBIfam" id="TIGR00756">
    <property type="entry name" value="PPR"/>
    <property type="match status" value="9"/>
</dbReference>
<dbReference type="PANTHER" id="PTHR47941">
    <property type="entry name" value="PENTATRICOPEPTIDE REPEAT-CONTAINING PROTEIN 3, MITOCHONDRIAL"/>
    <property type="match status" value="1"/>
</dbReference>
<dbReference type="Pfam" id="PF01535">
    <property type="entry name" value="PPR"/>
    <property type="match status" value="1"/>
</dbReference>
<dbReference type="Pfam" id="PF13041">
    <property type="entry name" value="PPR_2"/>
    <property type="match status" value="4"/>
</dbReference>
<dbReference type="SUPFAM" id="SSF48452">
    <property type="entry name" value="TPR-like"/>
    <property type="match status" value="1"/>
</dbReference>
<dbReference type="PROSITE" id="PS51375">
    <property type="entry name" value="PPR"/>
    <property type="match status" value="10"/>
</dbReference>
<evidence type="ECO:0000255" key="1"/>
<evidence type="ECO:0000305" key="2"/>
<accession>Q9FVX2</accession>